<protein>
    <recommendedName>
        <fullName>Putative uncharacterized transposon-derived protein F52C9.6</fullName>
    </recommendedName>
</protein>
<dbReference type="EMBL" id="FO081435">
    <property type="status" value="NOT_ANNOTATED_CDS"/>
    <property type="molecule type" value="Genomic_DNA"/>
</dbReference>
<dbReference type="PIR" id="T16425">
    <property type="entry name" value="T16425"/>
</dbReference>
<dbReference type="InParanoid" id="Q10126"/>
<dbReference type="Proteomes" id="UP000001940">
    <property type="component" value="Chromosome III"/>
</dbReference>
<dbReference type="InterPro" id="IPR043502">
    <property type="entry name" value="DNA/RNA_pol_sf"/>
</dbReference>
<dbReference type="InterPro" id="IPR000477">
    <property type="entry name" value="RT_dom"/>
</dbReference>
<dbReference type="PANTHER" id="PTHR47027">
    <property type="entry name" value="REVERSE TRANSCRIPTASE DOMAIN-CONTAINING PROTEIN"/>
    <property type="match status" value="1"/>
</dbReference>
<dbReference type="PANTHER" id="PTHR47027:SF20">
    <property type="entry name" value="REVERSE TRANSCRIPTASE-LIKE PROTEIN WITH RNA-DIRECTED DNA POLYMERASE DOMAIN"/>
    <property type="match status" value="1"/>
</dbReference>
<dbReference type="Pfam" id="PF00078">
    <property type="entry name" value="RVT_1"/>
    <property type="match status" value="1"/>
</dbReference>
<dbReference type="SUPFAM" id="SSF56672">
    <property type="entry name" value="DNA/RNA polymerases"/>
    <property type="match status" value="1"/>
</dbReference>
<dbReference type="PROSITE" id="PS50878">
    <property type="entry name" value="RT_POL"/>
    <property type="match status" value="1"/>
</dbReference>
<organism>
    <name type="scientific">Caenorhabditis elegans</name>
    <dbReference type="NCBI Taxonomy" id="6239"/>
    <lineage>
        <taxon>Eukaryota</taxon>
        <taxon>Metazoa</taxon>
        <taxon>Ecdysozoa</taxon>
        <taxon>Nematoda</taxon>
        <taxon>Chromadorea</taxon>
        <taxon>Rhabditida</taxon>
        <taxon>Rhabditina</taxon>
        <taxon>Rhabditomorpha</taxon>
        <taxon>Rhabditoidea</taxon>
        <taxon>Rhabditidae</taxon>
        <taxon>Peloderinae</taxon>
        <taxon>Caenorhabditis</taxon>
    </lineage>
</organism>
<feature type="chain" id="PRO_0000065357" description="Putative uncharacterized transposon-derived protein F52C9.6">
    <location>
        <begin position="1"/>
        <end position="279"/>
    </location>
</feature>
<feature type="domain" description="Reverse transcriptase" evidence="1">
    <location>
        <begin position="1"/>
        <end position="87"/>
    </location>
</feature>
<proteinExistence type="uncertain"/>
<name>YSM6_CAEEL</name>
<accession>Q10126</accession>
<reference key="1">
    <citation type="journal article" date="1998" name="Science">
        <title>Genome sequence of the nematode C. elegans: a platform for investigating biology.</title>
        <authorList>
            <consortium name="The C. elegans sequencing consortium"/>
        </authorList>
    </citation>
    <scope>NUCLEOTIDE SEQUENCE [LARGE SCALE GENOMIC DNA]</scope>
    <source>
        <strain>Bristol N2</strain>
    </source>
</reference>
<sequence length="279" mass="32467">MRVNGRNLTNLRFADDIVLIANHPNTASKMLQELVQKCSEVGLEINTGKTKVLRNRLADPSKVYFGSPSSTTQLDDVDEYIYLGRQINAHNNLMPEIHRRRRAAWAAFNGSKNTTDSITDKKIRVNLFDSIVLPALTYGSEAWTFNKALSERVRITHASLERRLVGITLTQQRERDLHREDIRVMSQVRDPLNFVKKRKLGWAGHVARRKDGRWTTLMTEWRPWNWKRYVGRTPMRWTDSLRKEITTRDADGEVITPWSTIAKDRKEWLAVIRRNTTNS</sequence>
<comment type="caution">
    <text evidence="2">Could be the product of a pseudogene.</text>
</comment>
<keyword id="KW-1185">Reference proteome</keyword>
<evidence type="ECO:0000255" key="1">
    <source>
        <dbReference type="PROSITE-ProRule" id="PRU00405"/>
    </source>
</evidence>
<evidence type="ECO:0000305" key="2"/>
<gene>
    <name type="ORF">F52C9.6</name>
</gene>